<dbReference type="EC" id="6.3.2.2" evidence="1"/>
<dbReference type="EMBL" id="BX640435">
    <property type="protein sequence ID" value="CAE39370.1"/>
    <property type="molecule type" value="Genomic_DNA"/>
</dbReference>
<dbReference type="RefSeq" id="WP_010929383.1">
    <property type="nucleotide sequence ID" value="NC_002928.3"/>
</dbReference>
<dbReference type="SMR" id="Q7W3F2"/>
<dbReference type="GeneID" id="93205886"/>
<dbReference type="KEGG" id="bpa:BPP4089"/>
<dbReference type="HOGENOM" id="CLU_020728_3_0_4"/>
<dbReference type="UniPathway" id="UPA00142">
    <property type="reaction ID" value="UER00209"/>
</dbReference>
<dbReference type="Proteomes" id="UP000001421">
    <property type="component" value="Chromosome"/>
</dbReference>
<dbReference type="GO" id="GO:0005829">
    <property type="term" value="C:cytosol"/>
    <property type="evidence" value="ECO:0007669"/>
    <property type="project" value="TreeGrafter"/>
</dbReference>
<dbReference type="GO" id="GO:0005524">
    <property type="term" value="F:ATP binding"/>
    <property type="evidence" value="ECO:0007669"/>
    <property type="project" value="UniProtKB-KW"/>
</dbReference>
<dbReference type="GO" id="GO:0004357">
    <property type="term" value="F:glutamate-cysteine ligase activity"/>
    <property type="evidence" value="ECO:0007669"/>
    <property type="project" value="UniProtKB-UniRule"/>
</dbReference>
<dbReference type="GO" id="GO:0046872">
    <property type="term" value="F:metal ion binding"/>
    <property type="evidence" value="ECO:0007669"/>
    <property type="project" value="TreeGrafter"/>
</dbReference>
<dbReference type="GO" id="GO:0006750">
    <property type="term" value="P:glutathione biosynthetic process"/>
    <property type="evidence" value="ECO:0007669"/>
    <property type="project" value="UniProtKB-UniRule"/>
</dbReference>
<dbReference type="Gene3D" id="3.30.590.20">
    <property type="match status" value="1"/>
</dbReference>
<dbReference type="HAMAP" id="MF_00578">
    <property type="entry name" value="Glu_cys_ligase"/>
    <property type="match status" value="1"/>
</dbReference>
<dbReference type="InterPro" id="IPR014746">
    <property type="entry name" value="Gln_synth/guanido_kin_cat_dom"/>
</dbReference>
<dbReference type="InterPro" id="IPR007370">
    <property type="entry name" value="Glu_cys_ligase"/>
</dbReference>
<dbReference type="InterPro" id="IPR006334">
    <property type="entry name" value="Glut_cys_ligase"/>
</dbReference>
<dbReference type="NCBIfam" id="TIGR01434">
    <property type="entry name" value="glu_cys_ligase"/>
    <property type="match status" value="1"/>
</dbReference>
<dbReference type="PANTHER" id="PTHR38761">
    <property type="entry name" value="GLUTAMATE--CYSTEINE LIGASE"/>
    <property type="match status" value="1"/>
</dbReference>
<dbReference type="PANTHER" id="PTHR38761:SF1">
    <property type="entry name" value="GLUTAMATE--CYSTEINE LIGASE"/>
    <property type="match status" value="1"/>
</dbReference>
<dbReference type="Pfam" id="PF04262">
    <property type="entry name" value="Glu_cys_ligase"/>
    <property type="match status" value="1"/>
</dbReference>
<dbReference type="SUPFAM" id="SSF55931">
    <property type="entry name" value="Glutamine synthetase/guanido kinase"/>
    <property type="match status" value="1"/>
</dbReference>
<keyword id="KW-0067">ATP-binding</keyword>
<keyword id="KW-0317">Glutathione biosynthesis</keyword>
<keyword id="KW-0436">Ligase</keyword>
<keyword id="KW-0547">Nucleotide-binding</keyword>
<name>GSH1_BORPA</name>
<sequence>MTDTAAQRHHRLQAHADLLTQTLRGIEKEGLRVDHQGVLARTAHPAGLGAALTNAHVTTDYSEALLELITGTHTEVDSLLGELRDTHRYVYGVLEGEYIWNQSMPATLPPEADIPIAWYGTSNTGMLKHVYRRGLAERYGKTMQCIAGVHYNFSLPDALWDVLVPDAPTPQARRSRGYISLIRNFTRYSWLLMYLFGSAPALAREFMRGRDHLLETLDPSTLYLPYATSLRMSDLGYQNKAQSRLKLCYNDLDTFLGRLYEAVTEPWPAYQAIGTRRDGQWIQLNTNVLQIENEYYSSIRPKRATGRCERPITALAERGVQYVEVRCLDIDPLTPEGISAETARFVDAFLLFCATSDSPFFPDNGYCQRSADNFAVVVKEGRKPGLMLDREGQAVSVPQWGHELLDQIAPYAALYDQALGGDAYAAALAAQRAKLDQPDLTPSARVLAALREGNVSFHDYSLDLSRRHADALRAQPLPAERTQAYAEAARQSVAEQLRLEQSDAVDFDTYVAHYHAALKNPLPSTAS</sequence>
<organism>
    <name type="scientific">Bordetella parapertussis (strain 12822 / ATCC BAA-587 / NCTC 13253)</name>
    <dbReference type="NCBI Taxonomy" id="257311"/>
    <lineage>
        <taxon>Bacteria</taxon>
        <taxon>Pseudomonadati</taxon>
        <taxon>Pseudomonadota</taxon>
        <taxon>Betaproteobacteria</taxon>
        <taxon>Burkholderiales</taxon>
        <taxon>Alcaligenaceae</taxon>
        <taxon>Bordetella</taxon>
    </lineage>
</organism>
<gene>
    <name evidence="1" type="primary">gshA</name>
    <name type="ordered locus">BPP4089</name>
</gene>
<protein>
    <recommendedName>
        <fullName evidence="1">Glutamate--cysteine ligase</fullName>
        <ecNumber evidence="1">6.3.2.2</ecNumber>
    </recommendedName>
    <alternativeName>
        <fullName evidence="1">Gamma-ECS</fullName>
        <shortName evidence="1">GCS</shortName>
    </alternativeName>
    <alternativeName>
        <fullName evidence="1">Gamma-glutamylcysteine synthetase</fullName>
    </alternativeName>
</protein>
<comment type="catalytic activity">
    <reaction evidence="1">
        <text>L-cysteine + L-glutamate + ATP = gamma-L-glutamyl-L-cysteine + ADP + phosphate + H(+)</text>
        <dbReference type="Rhea" id="RHEA:13285"/>
        <dbReference type="ChEBI" id="CHEBI:15378"/>
        <dbReference type="ChEBI" id="CHEBI:29985"/>
        <dbReference type="ChEBI" id="CHEBI:30616"/>
        <dbReference type="ChEBI" id="CHEBI:35235"/>
        <dbReference type="ChEBI" id="CHEBI:43474"/>
        <dbReference type="ChEBI" id="CHEBI:58173"/>
        <dbReference type="ChEBI" id="CHEBI:456216"/>
        <dbReference type="EC" id="6.3.2.2"/>
    </reaction>
</comment>
<comment type="pathway">
    <text evidence="1">Sulfur metabolism; glutathione biosynthesis; glutathione from L-cysteine and L-glutamate: step 1/2.</text>
</comment>
<comment type="similarity">
    <text evidence="1">Belongs to the glutamate--cysteine ligase type 1 family. Type 1 subfamily.</text>
</comment>
<feature type="chain" id="PRO_0000192519" description="Glutamate--cysteine ligase">
    <location>
        <begin position="1"/>
        <end position="527"/>
    </location>
</feature>
<accession>Q7W3F2</accession>
<proteinExistence type="inferred from homology"/>
<evidence type="ECO:0000255" key="1">
    <source>
        <dbReference type="HAMAP-Rule" id="MF_00578"/>
    </source>
</evidence>
<reference key="1">
    <citation type="journal article" date="2003" name="Nat. Genet.">
        <title>Comparative analysis of the genome sequences of Bordetella pertussis, Bordetella parapertussis and Bordetella bronchiseptica.</title>
        <authorList>
            <person name="Parkhill J."/>
            <person name="Sebaihia M."/>
            <person name="Preston A."/>
            <person name="Murphy L.D."/>
            <person name="Thomson N.R."/>
            <person name="Harris D.E."/>
            <person name="Holden M.T.G."/>
            <person name="Churcher C.M."/>
            <person name="Bentley S.D."/>
            <person name="Mungall K.L."/>
            <person name="Cerdeno-Tarraga A.-M."/>
            <person name="Temple L."/>
            <person name="James K.D."/>
            <person name="Harris B."/>
            <person name="Quail M.A."/>
            <person name="Achtman M."/>
            <person name="Atkin R."/>
            <person name="Baker S."/>
            <person name="Basham D."/>
            <person name="Bason N."/>
            <person name="Cherevach I."/>
            <person name="Chillingworth T."/>
            <person name="Collins M."/>
            <person name="Cronin A."/>
            <person name="Davis P."/>
            <person name="Doggett J."/>
            <person name="Feltwell T."/>
            <person name="Goble A."/>
            <person name="Hamlin N."/>
            <person name="Hauser H."/>
            <person name="Holroyd S."/>
            <person name="Jagels K."/>
            <person name="Leather S."/>
            <person name="Moule S."/>
            <person name="Norberczak H."/>
            <person name="O'Neil S."/>
            <person name="Ormond D."/>
            <person name="Price C."/>
            <person name="Rabbinowitsch E."/>
            <person name="Rutter S."/>
            <person name="Sanders M."/>
            <person name="Saunders D."/>
            <person name="Seeger K."/>
            <person name="Sharp S."/>
            <person name="Simmonds M."/>
            <person name="Skelton J."/>
            <person name="Squares R."/>
            <person name="Squares S."/>
            <person name="Stevens K."/>
            <person name="Unwin L."/>
            <person name="Whitehead S."/>
            <person name="Barrell B.G."/>
            <person name="Maskell D.J."/>
        </authorList>
    </citation>
    <scope>NUCLEOTIDE SEQUENCE [LARGE SCALE GENOMIC DNA]</scope>
    <source>
        <strain>12822 / ATCC BAA-587 / NCTC 13253</strain>
    </source>
</reference>